<evidence type="ECO:0000250" key="1">
    <source>
        <dbReference type="UniProtKB" id="P10906"/>
    </source>
</evidence>
<evidence type="ECO:0000255" key="2"/>
<evidence type="ECO:0000255" key="3">
    <source>
        <dbReference type="PROSITE-ProRule" id="PRU00441"/>
    </source>
</evidence>
<evidence type="ECO:0000305" key="4"/>
<comment type="function">
    <text evidence="1">Part of the ABC transporter complex UgpBAEC involved in sn-glycerol-3-phosphate (G3P) import. Probably responsible for the translocation of the substrate across the membrane.</text>
</comment>
<comment type="subunit">
    <text evidence="1">The complex is composed of two ATP-binding proteins (UgpC), two transmembrane proteins (UgpA and UgpE) and a solute-binding protein (UgpB).</text>
</comment>
<comment type="subcellular location">
    <subcellularLocation>
        <location evidence="1">Cell inner membrane</location>
        <topology evidence="2">Multi-pass membrane protein</topology>
    </subcellularLocation>
</comment>
<comment type="similarity">
    <text evidence="4">Belongs to the binding-protein-dependent transport system permease family.</text>
</comment>
<keyword id="KW-0997">Cell inner membrane</keyword>
<keyword id="KW-1003">Cell membrane</keyword>
<keyword id="KW-0472">Membrane</keyword>
<keyword id="KW-0812">Transmembrane</keyword>
<keyword id="KW-1133">Transmembrane helix</keyword>
<keyword id="KW-0813">Transport</keyword>
<dbReference type="EMBL" id="AE014292">
    <property type="protein sequence ID" value="AAN33846.1"/>
    <property type="molecule type" value="Genomic_DNA"/>
</dbReference>
<dbReference type="EMBL" id="CP002998">
    <property type="protein sequence ID" value="AEM20122.1"/>
    <property type="molecule type" value="Genomic_DNA"/>
</dbReference>
<dbReference type="RefSeq" id="WP_006192024.1">
    <property type="nucleotide sequence ID" value="NZ_KN046805.1"/>
</dbReference>
<dbReference type="SMR" id="Q8FW08"/>
<dbReference type="GeneID" id="45053688"/>
<dbReference type="KEGG" id="bms:BRA0657"/>
<dbReference type="KEGG" id="bsi:BS1330_II0651"/>
<dbReference type="PATRIC" id="fig|204722.21.peg.477"/>
<dbReference type="HOGENOM" id="CLU_016047_1_1_5"/>
<dbReference type="Proteomes" id="UP000007104">
    <property type="component" value="Chromosome II"/>
</dbReference>
<dbReference type="GO" id="GO:0005886">
    <property type="term" value="C:plasma membrane"/>
    <property type="evidence" value="ECO:0007669"/>
    <property type="project" value="UniProtKB-SubCell"/>
</dbReference>
<dbReference type="GO" id="GO:0055085">
    <property type="term" value="P:transmembrane transport"/>
    <property type="evidence" value="ECO:0007669"/>
    <property type="project" value="InterPro"/>
</dbReference>
<dbReference type="CDD" id="cd06261">
    <property type="entry name" value="TM_PBP2"/>
    <property type="match status" value="1"/>
</dbReference>
<dbReference type="Gene3D" id="1.10.3720.10">
    <property type="entry name" value="MetI-like"/>
    <property type="match status" value="1"/>
</dbReference>
<dbReference type="InterPro" id="IPR000515">
    <property type="entry name" value="MetI-like"/>
</dbReference>
<dbReference type="InterPro" id="IPR035906">
    <property type="entry name" value="MetI-like_sf"/>
</dbReference>
<dbReference type="NCBIfam" id="NF008210">
    <property type="entry name" value="PRK10973.1"/>
    <property type="match status" value="1"/>
</dbReference>
<dbReference type="PANTHER" id="PTHR43744">
    <property type="entry name" value="ABC TRANSPORTER PERMEASE PROTEIN MG189-RELATED-RELATED"/>
    <property type="match status" value="1"/>
</dbReference>
<dbReference type="PANTHER" id="PTHR43744:SF8">
    <property type="entry name" value="SN-GLYCEROL-3-PHOSPHATE TRANSPORT SYSTEM PERMEASE PROTEIN UGPE"/>
    <property type="match status" value="1"/>
</dbReference>
<dbReference type="Pfam" id="PF00528">
    <property type="entry name" value="BPD_transp_1"/>
    <property type="match status" value="1"/>
</dbReference>
<dbReference type="SUPFAM" id="SSF161098">
    <property type="entry name" value="MetI-like"/>
    <property type="match status" value="1"/>
</dbReference>
<dbReference type="PROSITE" id="PS50928">
    <property type="entry name" value="ABC_TM1"/>
    <property type="match status" value="1"/>
</dbReference>
<sequence>MIEQRPVSNLIGHLILILGIIIVAFPIYYTFVASLMTSTQIIRPPISLLPGDHLVENYREAIFGGVERVVGVSLERLLWNSFVVAMAIAVGKIIISFMSAFAIVFFRFPMRMFFFWMIFITLMLPVEVRILPTYKVIVDLGMIDTYAGLTLPLMASATATFLFRQFFLTIPGELVEAARIDNAGPFRFMRDILLPLSKTNIAALFVILSIYGWTQYLWPLLVTNDAKMNTIIIGLRRMVDWADASTSWNYVMVTAILAIIPPILVVVLMQRWFVKGLVETEK</sequence>
<gene>
    <name type="primary">ugpE</name>
    <name type="ordered locus">BRA0657</name>
    <name type="ordered locus">BS1330_II0651</name>
</gene>
<reference key="1">
    <citation type="journal article" date="2002" name="Proc. Natl. Acad. Sci. U.S.A.">
        <title>The Brucella suis genome reveals fundamental similarities between animal and plant pathogens and symbionts.</title>
        <authorList>
            <person name="Paulsen I.T."/>
            <person name="Seshadri R."/>
            <person name="Nelson K.E."/>
            <person name="Eisen J.A."/>
            <person name="Heidelberg J.F."/>
            <person name="Read T.D."/>
            <person name="Dodson R.J."/>
            <person name="Umayam L.A."/>
            <person name="Brinkac L.M."/>
            <person name="Beanan M.J."/>
            <person name="Daugherty S.C."/>
            <person name="DeBoy R.T."/>
            <person name="Durkin A.S."/>
            <person name="Kolonay J.F."/>
            <person name="Madupu R."/>
            <person name="Nelson W.C."/>
            <person name="Ayodeji B."/>
            <person name="Kraul M."/>
            <person name="Shetty J."/>
            <person name="Malek J.A."/>
            <person name="Van Aken S.E."/>
            <person name="Riedmuller S."/>
            <person name="Tettelin H."/>
            <person name="Gill S.R."/>
            <person name="White O."/>
            <person name="Salzberg S.L."/>
            <person name="Hoover D.L."/>
            <person name="Lindler L.E."/>
            <person name="Halling S.M."/>
            <person name="Boyle S.M."/>
            <person name="Fraser C.M."/>
        </authorList>
    </citation>
    <scope>NUCLEOTIDE SEQUENCE [LARGE SCALE GENOMIC DNA]</scope>
    <source>
        <strain>1330</strain>
    </source>
</reference>
<reference key="2">
    <citation type="journal article" date="2011" name="J. Bacteriol.">
        <title>Revised genome sequence of Brucella suis 1330.</title>
        <authorList>
            <person name="Tae H."/>
            <person name="Shallom S."/>
            <person name="Settlage R."/>
            <person name="Preston D."/>
            <person name="Adams L.G."/>
            <person name="Garner H.R."/>
        </authorList>
    </citation>
    <scope>NUCLEOTIDE SEQUENCE [LARGE SCALE GENOMIC DNA]</scope>
    <source>
        <strain>1330</strain>
    </source>
</reference>
<organism>
    <name type="scientific">Brucella suis biovar 1 (strain 1330)</name>
    <dbReference type="NCBI Taxonomy" id="204722"/>
    <lineage>
        <taxon>Bacteria</taxon>
        <taxon>Pseudomonadati</taxon>
        <taxon>Pseudomonadota</taxon>
        <taxon>Alphaproteobacteria</taxon>
        <taxon>Hyphomicrobiales</taxon>
        <taxon>Brucellaceae</taxon>
        <taxon>Brucella/Ochrobactrum group</taxon>
        <taxon>Brucella</taxon>
    </lineage>
</organism>
<protein>
    <recommendedName>
        <fullName evidence="1">sn-glycerol-3-phosphate transport system permease protein UgpE</fullName>
    </recommendedName>
</protein>
<proteinExistence type="inferred from homology"/>
<accession>Q8FW08</accession>
<accession>G0KD34</accession>
<feature type="chain" id="PRO_0000290140" description="sn-glycerol-3-phosphate transport system permease protein UgpE">
    <location>
        <begin position="1"/>
        <end position="282"/>
    </location>
</feature>
<feature type="transmembrane region" description="Helical" evidence="3">
    <location>
        <begin position="14"/>
        <end position="34"/>
    </location>
</feature>
<feature type="transmembrane region" description="Helical" evidence="3">
    <location>
        <begin position="86"/>
        <end position="106"/>
    </location>
</feature>
<feature type="transmembrane region" description="Helical" evidence="3">
    <location>
        <begin position="112"/>
        <end position="132"/>
    </location>
</feature>
<feature type="transmembrane region" description="Helical" evidence="3">
    <location>
        <begin position="146"/>
        <end position="168"/>
    </location>
</feature>
<feature type="transmembrane region" description="Helical" evidence="3">
    <location>
        <begin position="201"/>
        <end position="221"/>
    </location>
</feature>
<feature type="transmembrane region" description="Helical" evidence="3">
    <location>
        <begin position="248"/>
        <end position="268"/>
    </location>
</feature>
<feature type="domain" description="ABC transmembrane type-1" evidence="3">
    <location>
        <begin position="78"/>
        <end position="269"/>
    </location>
</feature>
<name>UGPE_BRUSU</name>